<sequence length="73" mass="7962">STKNGRDSNSKRLGVKVYGNQPAKAGSIIVRQRGLTFKPGKGVSVGKDYTIFATQNGIVQFESDKKEKIISVY</sequence>
<comment type="subcellular location">
    <subcellularLocation>
        <location>Plastid</location>
        <location>Chloroplast</location>
    </subcellularLocation>
</comment>
<comment type="similarity">
    <text evidence="1">Belongs to the bacterial ribosomal protein bL27 family.</text>
</comment>
<feature type="chain" id="PRO_0000181217" description="Large ribosomal subunit protein bL27c">
    <location>
        <begin position="1" status="less than"/>
        <end position="73"/>
    </location>
</feature>
<feature type="non-terminal residue">
    <location>
        <position position="1"/>
    </location>
</feature>
<geneLocation type="chloroplast"/>
<keyword id="KW-0150">Chloroplast</keyword>
<keyword id="KW-0934">Plastid</keyword>
<keyword id="KW-0687">Ribonucleoprotein</keyword>
<keyword id="KW-0689">Ribosomal protein</keyword>
<proteinExistence type="inferred from homology"/>
<protein>
    <recommendedName>
        <fullName evidence="1">Large ribosomal subunit protein bL27c</fullName>
    </recommendedName>
    <alternativeName>
        <fullName>50S ribosomal protein L27, chloroplastic</fullName>
    </alternativeName>
</protein>
<gene>
    <name type="primary">rpl27</name>
</gene>
<evidence type="ECO:0000305" key="1"/>
<name>RK27_CHRAL</name>
<organism>
    <name type="scientific">Chrysochromulina alifera</name>
    <name type="common">Plankton alga</name>
    <dbReference type="NCBI Taxonomy" id="35141"/>
    <lineage>
        <taxon>Eukaryota</taxon>
        <taxon>Haptista</taxon>
        <taxon>Haptophyta</taxon>
        <taxon>Prymnesiophyceae</taxon>
        <taxon>Prymnesiales</taxon>
        <taxon>Chrysochromulinaceae</taxon>
        <taxon>Chrysochromulina</taxon>
    </lineage>
</organism>
<accession>P41549</accession>
<reference key="1">
    <citation type="journal article" date="1994" name="Plant Mol. Biol.">
        <title>The gene for ribosomal protein L27 is located on the plastid rather than the nuclear genome of the chlorophyll c-containing alga Pleurochrysis carterae.</title>
        <authorList>
            <person name="Fujiwara S."/>
            <person name="Kawachi M."/>
            <person name="Inouye I."/>
            <person name="Someya J."/>
        </authorList>
    </citation>
    <scope>NUCLEOTIDE SEQUENCE [GENOMIC DNA]</scope>
</reference>
<dbReference type="EMBL" id="D26096">
    <property type="protein sequence ID" value="BAA05092.1"/>
    <property type="molecule type" value="Genomic_DNA"/>
</dbReference>
<dbReference type="SMR" id="P41549"/>
<dbReference type="GO" id="GO:0009507">
    <property type="term" value="C:chloroplast"/>
    <property type="evidence" value="ECO:0007669"/>
    <property type="project" value="UniProtKB-SubCell"/>
</dbReference>
<dbReference type="GO" id="GO:1990904">
    <property type="term" value="C:ribonucleoprotein complex"/>
    <property type="evidence" value="ECO:0007669"/>
    <property type="project" value="UniProtKB-KW"/>
</dbReference>
<dbReference type="GO" id="GO:0005840">
    <property type="term" value="C:ribosome"/>
    <property type="evidence" value="ECO:0007669"/>
    <property type="project" value="UniProtKB-KW"/>
</dbReference>
<dbReference type="GO" id="GO:0003735">
    <property type="term" value="F:structural constituent of ribosome"/>
    <property type="evidence" value="ECO:0007669"/>
    <property type="project" value="InterPro"/>
</dbReference>
<dbReference type="GO" id="GO:0006412">
    <property type="term" value="P:translation"/>
    <property type="evidence" value="ECO:0007669"/>
    <property type="project" value="InterPro"/>
</dbReference>
<dbReference type="FunFam" id="2.40.50.100:FF:000060">
    <property type="entry name" value="Apicoplast ribosomal protein L27"/>
    <property type="match status" value="1"/>
</dbReference>
<dbReference type="Gene3D" id="2.40.50.100">
    <property type="match status" value="1"/>
</dbReference>
<dbReference type="InterPro" id="IPR001684">
    <property type="entry name" value="Ribosomal_bL27"/>
</dbReference>
<dbReference type="InterPro" id="IPR018261">
    <property type="entry name" value="Ribosomal_bL27_CS"/>
</dbReference>
<dbReference type="NCBIfam" id="TIGR00062">
    <property type="entry name" value="L27"/>
    <property type="match status" value="1"/>
</dbReference>
<dbReference type="PANTHER" id="PTHR15893:SF0">
    <property type="entry name" value="LARGE RIBOSOMAL SUBUNIT PROTEIN BL27M"/>
    <property type="match status" value="1"/>
</dbReference>
<dbReference type="PANTHER" id="PTHR15893">
    <property type="entry name" value="RIBOSOMAL PROTEIN L27"/>
    <property type="match status" value="1"/>
</dbReference>
<dbReference type="Pfam" id="PF01016">
    <property type="entry name" value="Ribosomal_L27"/>
    <property type="match status" value="1"/>
</dbReference>
<dbReference type="PRINTS" id="PR00063">
    <property type="entry name" value="RIBOSOMALL27"/>
</dbReference>
<dbReference type="SUPFAM" id="SSF110324">
    <property type="entry name" value="Ribosomal L27 protein-like"/>
    <property type="match status" value="1"/>
</dbReference>
<dbReference type="PROSITE" id="PS00831">
    <property type="entry name" value="RIBOSOMAL_L27"/>
    <property type="match status" value="1"/>
</dbReference>